<organism>
    <name type="scientific">Halobacterium salinarum (strain ATCC 700922 / JCM 11081 / NRC-1)</name>
    <name type="common">Halobacterium halobium</name>
    <dbReference type="NCBI Taxonomy" id="64091"/>
    <lineage>
        <taxon>Archaea</taxon>
        <taxon>Methanobacteriati</taxon>
        <taxon>Methanobacteriota</taxon>
        <taxon>Stenosarchaea group</taxon>
        <taxon>Halobacteria</taxon>
        <taxon>Halobacteriales</taxon>
        <taxon>Halobacteriaceae</taxon>
        <taxon>Halobacterium</taxon>
        <taxon>Halobacterium salinarum NRC-34001</taxon>
    </lineage>
</organism>
<sequence length="362" mass="39124">MSDDTEDDSGGESTADMEFGEQPAPLGVKVGSTRTVVAEDDADSPSVTQTLTCLATYDDALTGEEHVIYGAEAATEYPDRVRFMLRSGLPEDEETTGLAKRFFEEFASANGLDTDSVVVYAIPTIDNEAGLDRLAEIIEDGPVGERRIASYPESLCGAVPALGDGLDAIEDTFVAINMGSTNLEACAYRRGEQLAPFSTGAITGTEVDRRIANYVEEETQGRVNIDLTTAREYKEQHADFNDYEPFSDIIQQPGGGTYEFTIEDAVMDAVDEFVDAAVDEVANVFLPDLASDYVKIYQQALDNPIVLTGGMGCIPGIVSEFETRLGEEIDREVEATTADEPETAAARGAHRIAERLVDLGEY</sequence>
<gene>
    <name evidence="4" type="ordered locus">VNG_0153C</name>
</gene>
<feature type="chain" id="PRO_0000462086" description="Salactin">
    <location>
        <begin position="1"/>
        <end position="362"/>
    </location>
</feature>
<feature type="region of interest" description="Disordered" evidence="1">
    <location>
        <begin position="1"/>
        <end position="28"/>
    </location>
</feature>
<feature type="compositionally biased region" description="Acidic residues" evidence="1">
    <location>
        <begin position="1"/>
        <end position="10"/>
    </location>
</feature>
<accession>Q9HSN1</accession>
<comment type="function">
    <text evidence="2">Actin homolog which might be involved in partitioning DNA between daughter cells when chromosomal copy number is low.</text>
</comment>
<comment type="subunit">
    <text evidence="2">Forms dynamically unstable filaments (PubMed:37966230). Monomers are added at the growing filament end (PubMed:37966230). In vitro, salactin polymerizes in the presence of ATP and AMP-PNP but not in the presence of ADP, GTP, ATPgammaS or buffer alone (PubMed:37966230).</text>
</comment>
<comment type="subcellular location">
    <subcellularLocation>
        <location evidence="2">Cytoplasm</location>
    </subcellularLocation>
    <text evidence="2">Polymers grow out of the cell poles towards the midcell, then suddenly depolymerize, with filaments rapidly shrinking back to the poles.</text>
</comment>
<comment type="disruption phenotype">
    <text evidence="2">In standard phosphate media, deletion of the gene does not affect the rod shape of the cell, growth rates or motility (PubMed:37966230). In low-phosphate media, when the chromosomal copy number becomes limiting, cells lacking this gene show defects in cell shape, perturbed DNA distributions, reduced growth rate and reduced viability (PubMed:37966230).</text>
</comment>
<proteinExistence type="evidence at protein level"/>
<name>SALAC_HALSA</name>
<reference evidence="4" key="1">
    <citation type="journal article" date="2000" name="Proc. Natl. Acad. Sci. U.S.A.">
        <title>Genome sequence of Halobacterium species NRC-1.</title>
        <authorList>
            <person name="Ng W.V."/>
            <person name="Kennedy S.P."/>
            <person name="Mahairas G.G."/>
            <person name="Berquist B."/>
            <person name="Pan M."/>
            <person name="Shukla H.D."/>
            <person name="Lasky S.R."/>
            <person name="Baliga N.S."/>
            <person name="Thorsson V."/>
            <person name="Sbrogna J."/>
            <person name="Swartzell S."/>
            <person name="Weir D."/>
            <person name="Hall J."/>
            <person name="Dahl T.A."/>
            <person name="Welti R."/>
            <person name="Goo Y.A."/>
            <person name="Leithauser B."/>
            <person name="Keller K."/>
            <person name="Cruz R."/>
            <person name="Danson M.J."/>
            <person name="Hough D.W."/>
            <person name="Maddocks D.G."/>
            <person name="Jablonski P.E."/>
            <person name="Krebs M.P."/>
            <person name="Angevine C.M."/>
            <person name="Dale H."/>
            <person name="Isenbarger T.A."/>
            <person name="Peck R.F."/>
            <person name="Pohlschroder M."/>
            <person name="Spudich J.L."/>
            <person name="Jung K.-H."/>
            <person name="Alam M."/>
            <person name="Freitas T."/>
            <person name="Hou S."/>
            <person name="Daniels C.J."/>
            <person name="Dennis P.P."/>
            <person name="Omer A.D."/>
            <person name="Ebhardt H."/>
            <person name="Lowe T.M."/>
            <person name="Liang P."/>
            <person name="Riley M."/>
            <person name="Hood L."/>
            <person name="DasSarma S."/>
        </authorList>
    </citation>
    <scope>NUCLEOTIDE SEQUENCE [LARGE SCALE GENOMIC DNA]</scope>
    <source>
        <strain>ATCC 700922 / JCM 11081 / NRC-1</strain>
    </source>
</reference>
<reference evidence="5" key="2">
    <citation type="journal article" date="2019" name="Microbiol. Resour. Announc.">
        <title>The Genome Sequence of the Halobacterium salinarum Type Strain Is Closely Related to That of Laboratory Strains NRC-1 and R1.</title>
        <authorList>
            <person name="Pfeiffer F."/>
            <person name="Marchfelder A."/>
            <person name="Habermann B."/>
            <person name="Dyall-Smith M.L."/>
        </authorList>
    </citation>
    <scope>GENOME REANNOTATION</scope>
    <source>
        <strain>ATCC 700922 / JCM 11081 / NRC-1</strain>
    </source>
</reference>
<reference key="3">
    <citation type="journal article" date="2023" name="MBio">
        <title>Salactin, a dynamically unstable actin homolog in Haloarchaea.</title>
        <authorList>
            <person name="Zheng J."/>
            <person name="Mallon J."/>
            <person name="Lammers A."/>
            <person name="Rados T."/>
            <person name="Litschel T."/>
            <person name="Moody E.R.R."/>
            <person name="Ramirez-Diaz D.A."/>
            <person name="Schmid A."/>
            <person name="Williams T.A."/>
            <person name="Bisson-Filho A.W."/>
            <person name="Garner E."/>
        </authorList>
    </citation>
    <scope>FUNCTION</scope>
    <scope>SUBUNIT</scope>
    <scope>SUBCELLULAR LOCATION</scope>
    <scope>DISRUPTION PHENOTYPE</scope>
    <source>
        <strain>ATCC 700922 / JCM 11081 / NRC-1</strain>
    </source>
</reference>
<evidence type="ECO:0000256" key="1">
    <source>
        <dbReference type="SAM" id="MobiDB-lite"/>
    </source>
</evidence>
<evidence type="ECO:0000269" key="2">
    <source>
    </source>
</evidence>
<evidence type="ECO:0000303" key="3">
    <source>
    </source>
</evidence>
<evidence type="ECO:0000312" key="4">
    <source>
        <dbReference type="EMBL" id="AAG18772.1"/>
    </source>
</evidence>
<evidence type="ECO:0000312" key="5">
    <source>
        <dbReference type="EMBL" id="DAC77458.1"/>
    </source>
</evidence>
<dbReference type="EMBL" id="AE004437">
    <property type="protein sequence ID" value="AAG18772.1"/>
    <property type="molecule type" value="Genomic_DNA"/>
</dbReference>
<dbReference type="EMBL" id="BK010829">
    <property type="protein sequence ID" value="DAC77458.1"/>
    <property type="molecule type" value="Genomic_DNA"/>
</dbReference>
<dbReference type="PIR" id="H84175">
    <property type="entry name" value="H84175"/>
</dbReference>
<dbReference type="RefSeq" id="WP_010902067.1">
    <property type="nucleotide sequence ID" value="NC_002607.1"/>
</dbReference>
<dbReference type="STRING" id="64091.VNG_0153C"/>
<dbReference type="PaxDb" id="64091-VNG_0153C"/>
<dbReference type="KEGG" id="hal:VNG_0153C"/>
<dbReference type="PATRIC" id="fig|64091.14.peg.108"/>
<dbReference type="HOGENOM" id="CLU_757812_0_0_2"/>
<dbReference type="OrthoDB" id="301490at2157"/>
<dbReference type="Proteomes" id="UP000000554">
    <property type="component" value="Chromosome"/>
</dbReference>
<dbReference type="GO" id="GO:0005737">
    <property type="term" value="C:cytoplasm"/>
    <property type="evidence" value="ECO:0007669"/>
    <property type="project" value="UniProtKB-SubCell"/>
</dbReference>
<dbReference type="Gene3D" id="3.30.420.40">
    <property type="match status" value="1"/>
</dbReference>
<dbReference type="InterPro" id="IPR043129">
    <property type="entry name" value="ATPase_NBD"/>
</dbReference>
<dbReference type="Pfam" id="PF25229">
    <property type="entry name" value="Salactin"/>
    <property type="match status" value="1"/>
</dbReference>
<dbReference type="SUPFAM" id="SSF53067">
    <property type="entry name" value="Actin-like ATPase domain"/>
    <property type="match status" value="1"/>
</dbReference>
<protein>
    <recommendedName>
        <fullName evidence="3">Salactin</fullName>
    </recommendedName>
</protein>
<keyword id="KW-0963">Cytoplasm</keyword>
<keyword id="KW-1185">Reference proteome</keyword>